<feature type="chain" id="PRO_0000427093" description="Probable enoyl-CoA hydratase echA6">
    <location>
        <begin position="1"/>
        <end position="243"/>
    </location>
</feature>
<protein>
    <recommendedName>
        <fullName>Probable enoyl-CoA hydratase echA6</fullName>
        <ecNumber>4.2.1.17</ecNumber>
    </recommendedName>
</protein>
<dbReference type="EC" id="4.2.1.17"/>
<dbReference type="EMBL" id="AE000516">
    <property type="protein sequence ID" value="AAK45175.1"/>
    <property type="molecule type" value="Genomic_DNA"/>
</dbReference>
<dbReference type="PIR" id="F70783">
    <property type="entry name" value="F70783"/>
</dbReference>
<dbReference type="RefSeq" id="WP_003404702.1">
    <property type="nucleotide sequence ID" value="NZ_KK341227.1"/>
</dbReference>
<dbReference type="SMR" id="P9WNP0"/>
<dbReference type="KEGG" id="mtc:MT0928"/>
<dbReference type="PATRIC" id="fig|83331.31.peg.997"/>
<dbReference type="HOGENOM" id="CLU_009834_7_2_11"/>
<dbReference type="Proteomes" id="UP000001020">
    <property type="component" value="Chromosome"/>
</dbReference>
<dbReference type="GO" id="GO:0004300">
    <property type="term" value="F:enoyl-CoA hydratase activity"/>
    <property type="evidence" value="ECO:0007669"/>
    <property type="project" value="UniProtKB-EC"/>
</dbReference>
<dbReference type="GO" id="GO:0006635">
    <property type="term" value="P:fatty acid beta-oxidation"/>
    <property type="evidence" value="ECO:0007669"/>
    <property type="project" value="TreeGrafter"/>
</dbReference>
<dbReference type="CDD" id="cd06558">
    <property type="entry name" value="crotonase-like"/>
    <property type="match status" value="1"/>
</dbReference>
<dbReference type="FunFam" id="3.90.226.10:FF:000115">
    <property type="entry name" value="Probable enoyl-CoA hydratase echA6"/>
    <property type="match status" value="1"/>
</dbReference>
<dbReference type="Gene3D" id="3.90.226.10">
    <property type="entry name" value="2-enoyl-CoA Hydratase, Chain A, domain 1"/>
    <property type="match status" value="1"/>
</dbReference>
<dbReference type="InterPro" id="IPR029045">
    <property type="entry name" value="ClpP/crotonase-like_dom_sf"/>
</dbReference>
<dbReference type="InterPro" id="IPR018376">
    <property type="entry name" value="Enoyl-CoA_hyd/isom_CS"/>
</dbReference>
<dbReference type="InterPro" id="IPR001753">
    <property type="entry name" value="Enoyl-CoA_hydra/iso"/>
</dbReference>
<dbReference type="NCBIfam" id="NF005891">
    <property type="entry name" value="PRK07854.1"/>
    <property type="match status" value="1"/>
</dbReference>
<dbReference type="PANTHER" id="PTHR11941:SF169">
    <property type="entry name" value="(7AS)-7A-METHYL-1,5-DIOXO-2,3,5,6,7,7A-HEXAHYDRO-1H-INDENE-CARBOXYL-COA HYDROLASE"/>
    <property type="match status" value="1"/>
</dbReference>
<dbReference type="PANTHER" id="PTHR11941">
    <property type="entry name" value="ENOYL-COA HYDRATASE-RELATED"/>
    <property type="match status" value="1"/>
</dbReference>
<dbReference type="Pfam" id="PF00378">
    <property type="entry name" value="ECH_1"/>
    <property type="match status" value="1"/>
</dbReference>
<dbReference type="SUPFAM" id="SSF52096">
    <property type="entry name" value="ClpP/crotonase"/>
    <property type="match status" value="1"/>
</dbReference>
<dbReference type="PROSITE" id="PS00166">
    <property type="entry name" value="ENOYL_COA_HYDRATASE"/>
    <property type="match status" value="1"/>
</dbReference>
<name>ECHA6_MYCTO</name>
<sequence length="243" mass="26029">MIGITQAEAVLTIELQRPERRNALNSQLVEELTQAIRKAGDGSARAIVLTGQGTAFCAGADLSGDAFAADYPDRLIELHKAMDASPMPVVGAINGPAIGAGLQLAMQCDLRVVAPDAFFQFPTSKYGLALDNWSIRRLSSLVGHGRARAMLLSAEKLTAEIALHTGMANRIGTLADAQAWAAEIARLAPLAIQHAKRVLNDDGAIEEAWPAHKELFDKAWGSQDVIEAQVARMEKRPPKFQGA</sequence>
<accession>P9WNP0</accession>
<accession>L0T7V5</accession>
<accession>P64014</accession>
<accession>Q10533</accession>
<organism>
    <name type="scientific">Mycobacterium tuberculosis (strain CDC 1551 / Oshkosh)</name>
    <dbReference type="NCBI Taxonomy" id="83331"/>
    <lineage>
        <taxon>Bacteria</taxon>
        <taxon>Bacillati</taxon>
        <taxon>Actinomycetota</taxon>
        <taxon>Actinomycetes</taxon>
        <taxon>Mycobacteriales</taxon>
        <taxon>Mycobacteriaceae</taxon>
        <taxon>Mycobacterium</taxon>
        <taxon>Mycobacterium tuberculosis complex</taxon>
    </lineage>
</organism>
<evidence type="ECO:0000250" key="1"/>
<evidence type="ECO:0000305" key="2"/>
<reference key="1">
    <citation type="journal article" date="2002" name="J. Bacteriol.">
        <title>Whole-genome comparison of Mycobacterium tuberculosis clinical and laboratory strains.</title>
        <authorList>
            <person name="Fleischmann R.D."/>
            <person name="Alland D."/>
            <person name="Eisen J.A."/>
            <person name="Carpenter L."/>
            <person name="White O."/>
            <person name="Peterson J.D."/>
            <person name="DeBoy R.T."/>
            <person name="Dodson R.J."/>
            <person name="Gwinn M.L."/>
            <person name="Haft D.H."/>
            <person name="Hickey E.K."/>
            <person name="Kolonay J.F."/>
            <person name="Nelson W.C."/>
            <person name="Umayam L.A."/>
            <person name="Ermolaeva M.D."/>
            <person name="Salzberg S.L."/>
            <person name="Delcher A."/>
            <person name="Utterback T.R."/>
            <person name="Weidman J.F."/>
            <person name="Khouri H.M."/>
            <person name="Gill J."/>
            <person name="Mikula A."/>
            <person name="Bishai W."/>
            <person name="Jacobs W.R. Jr."/>
            <person name="Venter J.C."/>
            <person name="Fraser C.M."/>
        </authorList>
    </citation>
    <scope>NUCLEOTIDE SEQUENCE [LARGE SCALE GENOMIC DNA]</scope>
    <source>
        <strain>CDC 1551 / Oshkosh</strain>
    </source>
</reference>
<proteinExistence type="inferred from homology"/>
<comment type="function">
    <text evidence="1">Could possibly oxidize fatty acids using specific components.</text>
</comment>
<comment type="catalytic activity">
    <reaction>
        <text>a (3S)-3-hydroxyacyl-CoA = a (2E)-enoyl-CoA + H2O</text>
        <dbReference type="Rhea" id="RHEA:16105"/>
        <dbReference type="ChEBI" id="CHEBI:15377"/>
        <dbReference type="ChEBI" id="CHEBI:57318"/>
        <dbReference type="ChEBI" id="CHEBI:58856"/>
        <dbReference type="EC" id="4.2.1.17"/>
    </reaction>
</comment>
<comment type="catalytic activity">
    <reaction>
        <text>a 4-saturated-(3S)-3-hydroxyacyl-CoA = a (3E)-enoyl-CoA + H2O</text>
        <dbReference type="Rhea" id="RHEA:20724"/>
        <dbReference type="ChEBI" id="CHEBI:15377"/>
        <dbReference type="ChEBI" id="CHEBI:58521"/>
        <dbReference type="ChEBI" id="CHEBI:137480"/>
        <dbReference type="EC" id="4.2.1.17"/>
    </reaction>
</comment>
<comment type="similarity">
    <text evidence="2">Belongs to the enoyl-CoA hydratase/isomerase family.</text>
</comment>
<gene>
    <name type="primary">echA6</name>
    <name type="ordered locus">MT0928</name>
</gene>
<keyword id="KW-0276">Fatty acid metabolism</keyword>
<keyword id="KW-0443">Lipid metabolism</keyword>
<keyword id="KW-0456">Lyase</keyword>
<keyword id="KW-1185">Reference proteome</keyword>